<sequence length="106" mass="11331">MDLIESIRALAALAFTLGLIGLAAWALRKYGPDSIGRAIAARQDRRLKVIESLALDPTRRLVVVSLDGEERLVLLGDGRLLDWTPKGPPPASALSPSPVAEPEPVV</sequence>
<comment type="subcellular location">
    <subcellularLocation>
        <location evidence="4">Cell membrane</location>
        <topology evidence="4">Single-pass membrane protein</topology>
    </subcellularLocation>
    <subcellularLocation>
        <location evidence="1">Bacterial flagellum basal body</location>
    </subcellularLocation>
</comment>
<comment type="developmental stage">
    <text>Transcribed under cell cycle control, with a peak in the middle portion of the cell cycle. Later, expression occurs in both poles of the predivisional cell.</text>
</comment>
<comment type="similarity">
    <text evidence="4">Belongs to the FliO/MopB family.</text>
</comment>
<organism>
    <name type="scientific">Caulobacter vibrioides (strain ATCC 19089 / CIP 103742 / CB 15)</name>
    <name type="common">Caulobacter crescentus</name>
    <dbReference type="NCBI Taxonomy" id="190650"/>
    <lineage>
        <taxon>Bacteria</taxon>
        <taxon>Pseudomonadati</taxon>
        <taxon>Pseudomonadota</taxon>
        <taxon>Alphaproteobacteria</taxon>
        <taxon>Caulobacterales</taxon>
        <taxon>Caulobacteraceae</taxon>
        <taxon>Caulobacter</taxon>
    </lineage>
</organism>
<proteinExistence type="evidence at transcript level"/>
<keyword id="KW-0975">Bacterial flagellum</keyword>
<keyword id="KW-1003">Cell membrane</keyword>
<keyword id="KW-0145">Chemotaxis</keyword>
<keyword id="KW-0283">Flagellar rotation</keyword>
<keyword id="KW-0472">Membrane</keyword>
<keyword id="KW-1185">Reference proteome</keyword>
<keyword id="KW-0812">Transmembrane</keyword>
<keyword id="KW-1133">Transmembrane helix</keyword>
<name>Y952_CAUVC</name>
<accession>Q45979</accession>
<dbReference type="EMBL" id="U20387">
    <property type="protein sequence ID" value="AAA86881.1"/>
    <property type="molecule type" value="Genomic_DNA"/>
</dbReference>
<dbReference type="EMBL" id="AE005673">
    <property type="protein sequence ID" value="AAK22936.1"/>
    <property type="molecule type" value="Genomic_DNA"/>
</dbReference>
<dbReference type="PIR" id="D87367">
    <property type="entry name" value="D87367"/>
</dbReference>
<dbReference type="RefSeq" id="NP_419768.1">
    <property type="nucleotide sequence ID" value="NC_002696.2"/>
</dbReference>
<dbReference type="RefSeq" id="WP_010918836.1">
    <property type="nucleotide sequence ID" value="NC_002696.2"/>
</dbReference>
<dbReference type="STRING" id="190650.CC_0952"/>
<dbReference type="EnsemblBacteria" id="AAK22936">
    <property type="protein sequence ID" value="AAK22936"/>
    <property type="gene ID" value="CC_0952"/>
</dbReference>
<dbReference type="KEGG" id="ccr:CC_0952"/>
<dbReference type="PATRIC" id="fig|190650.5.peg.967"/>
<dbReference type="eggNOG" id="COG3190">
    <property type="taxonomic scope" value="Bacteria"/>
</dbReference>
<dbReference type="HOGENOM" id="CLU_148589_2_0_5"/>
<dbReference type="BioCyc" id="CAULO:CC0952-MONOMER"/>
<dbReference type="Proteomes" id="UP000001816">
    <property type="component" value="Chromosome"/>
</dbReference>
<dbReference type="GO" id="GO:0009425">
    <property type="term" value="C:bacterial-type flagellum basal body"/>
    <property type="evidence" value="ECO:0007669"/>
    <property type="project" value="UniProtKB-SubCell"/>
</dbReference>
<dbReference type="GO" id="GO:0005886">
    <property type="term" value="C:plasma membrane"/>
    <property type="evidence" value="ECO:0007669"/>
    <property type="project" value="UniProtKB-SubCell"/>
</dbReference>
<dbReference type="GO" id="GO:0097588">
    <property type="term" value="P:archaeal or bacterial-type flagellum-dependent cell motility"/>
    <property type="evidence" value="ECO:0007669"/>
    <property type="project" value="UniProtKB-KW"/>
</dbReference>
<dbReference type="GO" id="GO:0044781">
    <property type="term" value="P:bacterial-type flagellum organization"/>
    <property type="evidence" value="ECO:0007669"/>
    <property type="project" value="InterPro"/>
</dbReference>
<dbReference type="GO" id="GO:0006935">
    <property type="term" value="P:chemotaxis"/>
    <property type="evidence" value="ECO:0007669"/>
    <property type="project" value="UniProtKB-KW"/>
</dbReference>
<dbReference type="InterPro" id="IPR022781">
    <property type="entry name" value="Flagellar_biosynth_FliO"/>
</dbReference>
<dbReference type="InterPro" id="IPR052205">
    <property type="entry name" value="FliO/MopB"/>
</dbReference>
<dbReference type="PANTHER" id="PTHR38766">
    <property type="entry name" value="FLAGELLAR PROTEIN FLIO"/>
    <property type="match status" value="1"/>
</dbReference>
<dbReference type="PANTHER" id="PTHR38766:SF1">
    <property type="entry name" value="FLAGELLAR PROTEIN FLIO"/>
    <property type="match status" value="1"/>
</dbReference>
<dbReference type="Pfam" id="PF04347">
    <property type="entry name" value="FliO"/>
    <property type="match status" value="1"/>
</dbReference>
<protein>
    <recommendedName>
        <fullName>Uncharacterized protein CC_0952</fullName>
    </recommendedName>
</protein>
<feature type="chain" id="PRO_0000206848" description="Uncharacterized protein CC_0952">
    <location>
        <begin position="1"/>
        <end position="106"/>
    </location>
</feature>
<feature type="transmembrane region" description="Helical" evidence="2">
    <location>
        <begin position="9"/>
        <end position="27"/>
    </location>
</feature>
<feature type="region of interest" description="Disordered" evidence="3">
    <location>
        <begin position="84"/>
        <end position="106"/>
    </location>
</feature>
<reference key="1">
    <citation type="journal article" date="1995" name="J. Bacteriol.">
        <title>Temporal and spatial regulation of fliP, an early flagellar gene of Caulobacter crescentus that is required for motility and normal cell division.</title>
        <authorList>
            <person name="Gober J.W."/>
            <person name="Boyd C.H."/>
            <person name="Jarvis M."/>
            <person name="Mangan E.K."/>
            <person name="Rizzo M.F."/>
            <person name="Wingrove J.A."/>
        </authorList>
    </citation>
    <scope>NUCLEOTIDE SEQUENCE [GENOMIC DNA]</scope>
    <source>
        <strain>ATCC 19089 / CIP 103742 / CB 15</strain>
    </source>
</reference>
<reference key="2">
    <citation type="journal article" date="2001" name="Proc. Natl. Acad. Sci. U.S.A.">
        <title>Complete genome sequence of Caulobacter crescentus.</title>
        <authorList>
            <person name="Nierman W.C."/>
            <person name="Feldblyum T.V."/>
            <person name="Laub M.T."/>
            <person name="Paulsen I.T."/>
            <person name="Nelson K.E."/>
            <person name="Eisen J.A."/>
            <person name="Heidelberg J.F."/>
            <person name="Alley M.R.K."/>
            <person name="Ohta N."/>
            <person name="Maddock J.R."/>
            <person name="Potocka I."/>
            <person name="Nelson W.C."/>
            <person name="Newton A."/>
            <person name="Stephens C."/>
            <person name="Phadke N.D."/>
            <person name="Ely B."/>
            <person name="DeBoy R.T."/>
            <person name="Dodson R.J."/>
            <person name="Durkin A.S."/>
            <person name="Gwinn M.L."/>
            <person name="Haft D.H."/>
            <person name="Kolonay J.F."/>
            <person name="Smit J."/>
            <person name="Craven M.B."/>
            <person name="Khouri H.M."/>
            <person name="Shetty J."/>
            <person name="Berry K.J."/>
            <person name="Utterback T.R."/>
            <person name="Tran K."/>
            <person name="Wolf A.M."/>
            <person name="Vamathevan J.J."/>
            <person name="Ermolaeva M.D."/>
            <person name="White O."/>
            <person name="Salzberg S.L."/>
            <person name="Venter J.C."/>
            <person name="Shapiro L."/>
            <person name="Fraser C.M."/>
        </authorList>
    </citation>
    <scope>NUCLEOTIDE SEQUENCE [LARGE SCALE GENOMIC DNA]</scope>
    <source>
        <strain>ATCC 19089 / CIP 103742 / CB 15</strain>
    </source>
</reference>
<evidence type="ECO:0000250" key="1"/>
<evidence type="ECO:0000255" key="2"/>
<evidence type="ECO:0000256" key="3">
    <source>
        <dbReference type="SAM" id="MobiDB-lite"/>
    </source>
</evidence>
<evidence type="ECO:0000305" key="4"/>
<gene>
    <name type="ordered locus">CC_0952</name>
</gene>